<evidence type="ECO:0000250" key="1"/>
<evidence type="ECO:0000255" key="2"/>
<evidence type="ECO:0000255" key="3">
    <source>
        <dbReference type="PROSITE-ProRule" id="PRU10007"/>
    </source>
</evidence>
<evidence type="ECO:0000255" key="4">
    <source>
        <dbReference type="PROSITE-ProRule" id="PRU10008"/>
    </source>
</evidence>
<evidence type="ECO:0000269" key="5">
    <source>
    </source>
</evidence>
<evidence type="ECO:0000269" key="6">
    <source>
    </source>
</evidence>
<evidence type="ECO:0000269" key="7">
    <source>
    </source>
</evidence>
<evidence type="ECO:0000305" key="8"/>
<dbReference type="EC" id="1.2.1.-"/>
<dbReference type="EMBL" id="U00062">
    <property type="protein sequence ID" value="AAB68915.1"/>
    <property type="molecule type" value="Genomic_DNA"/>
</dbReference>
<dbReference type="EMBL" id="BK006934">
    <property type="protein sequence ID" value="DAA06730.1"/>
    <property type="molecule type" value="Genomic_DNA"/>
</dbReference>
<dbReference type="PIR" id="S46746">
    <property type="entry name" value="S46746"/>
</dbReference>
<dbReference type="RefSeq" id="NP_011904.1">
    <property type="nucleotide sequence ID" value="NM_001179169.1"/>
</dbReference>
<dbReference type="SMR" id="P38694"/>
<dbReference type="BioGRID" id="36470">
    <property type="interactions" value="130"/>
</dbReference>
<dbReference type="DIP" id="DIP-1878N"/>
<dbReference type="FunCoup" id="P38694">
    <property type="interactions" value="246"/>
</dbReference>
<dbReference type="IntAct" id="P38694">
    <property type="interactions" value="20"/>
</dbReference>
<dbReference type="MINT" id="P38694"/>
<dbReference type="STRING" id="4932.YHR039C"/>
<dbReference type="GlyCosmos" id="P38694">
    <property type="glycosylation" value="3 sites, No reported glycans"/>
</dbReference>
<dbReference type="GlyGen" id="P38694">
    <property type="glycosylation" value="3 sites"/>
</dbReference>
<dbReference type="iPTMnet" id="P38694"/>
<dbReference type="PaxDb" id="4932-YHR039C"/>
<dbReference type="PeptideAtlas" id="P38694"/>
<dbReference type="EnsemblFungi" id="YHR039C_mRNA">
    <property type="protein sequence ID" value="YHR039C"/>
    <property type="gene ID" value="YHR039C"/>
</dbReference>
<dbReference type="GeneID" id="856434"/>
<dbReference type="KEGG" id="sce:YHR039C"/>
<dbReference type="AGR" id="SGD:S000001081"/>
<dbReference type="SGD" id="S000001081">
    <property type="gene designation" value="MSC7"/>
</dbReference>
<dbReference type="VEuPathDB" id="FungiDB:YHR039C"/>
<dbReference type="eggNOG" id="KOG2454">
    <property type="taxonomic scope" value="Eukaryota"/>
</dbReference>
<dbReference type="HOGENOM" id="CLU_005391_1_0_1"/>
<dbReference type="InParanoid" id="P38694"/>
<dbReference type="OMA" id="ILMRGTF"/>
<dbReference type="OrthoDB" id="310895at2759"/>
<dbReference type="BioCyc" id="YEAST:G3O-31098-MONOMER"/>
<dbReference type="BioGRID-ORCS" id="856434">
    <property type="hits" value="2 hits in 10 CRISPR screens"/>
</dbReference>
<dbReference type="PRO" id="PR:P38694"/>
<dbReference type="Proteomes" id="UP000002311">
    <property type="component" value="Chromosome VIII"/>
</dbReference>
<dbReference type="RNAct" id="P38694">
    <property type="molecule type" value="protein"/>
</dbReference>
<dbReference type="GO" id="GO:0005783">
    <property type="term" value="C:endoplasmic reticulum"/>
    <property type="evidence" value="ECO:0007005"/>
    <property type="project" value="SGD"/>
</dbReference>
<dbReference type="GO" id="GO:0004029">
    <property type="term" value="F:aldehyde dehydrogenase (NAD+) activity"/>
    <property type="evidence" value="ECO:0000318"/>
    <property type="project" value="GO_Central"/>
</dbReference>
<dbReference type="GO" id="GO:0007131">
    <property type="term" value="P:reciprocal meiotic recombination"/>
    <property type="evidence" value="ECO:0000315"/>
    <property type="project" value="SGD"/>
</dbReference>
<dbReference type="CDD" id="cd07098">
    <property type="entry name" value="ALDH_F15-22"/>
    <property type="match status" value="1"/>
</dbReference>
<dbReference type="FunFam" id="3.40.605.10:FF:000014">
    <property type="entry name" value="aldehyde dehydrogenase 22A1"/>
    <property type="match status" value="1"/>
</dbReference>
<dbReference type="FunFam" id="3.40.309.10:FF:000024">
    <property type="entry name" value="Betaine aldehyde dehydrogenase"/>
    <property type="match status" value="1"/>
</dbReference>
<dbReference type="Gene3D" id="3.40.605.10">
    <property type="entry name" value="Aldehyde Dehydrogenase, Chain A, domain 1"/>
    <property type="match status" value="1"/>
</dbReference>
<dbReference type="Gene3D" id="3.40.309.10">
    <property type="entry name" value="Aldehyde Dehydrogenase, Chain A, domain 2"/>
    <property type="match status" value="1"/>
</dbReference>
<dbReference type="InterPro" id="IPR016161">
    <property type="entry name" value="Ald_DH/histidinol_DH"/>
</dbReference>
<dbReference type="InterPro" id="IPR016163">
    <property type="entry name" value="Ald_DH_C"/>
</dbReference>
<dbReference type="InterPro" id="IPR016160">
    <property type="entry name" value="Ald_DH_CS_CYS"/>
</dbReference>
<dbReference type="InterPro" id="IPR029510">
    <property type="entry name" value="Ald_DH_CS_GLU"/>
</dbReference>
<dbReference type="InterPro" id="IPR016162">
    <property type="entry name" value="Ald_DH_N"/>
</dbReference>
<dbReference type="InterPro" id="IPR015590">
    <property type="entry name" value="Aldehyde_DH_dom"/>
</dbReference>
<dbReference type="PANTHER" id="PTHR11699">
    <property type="entry name" value="ALDEHYDE DEHYDROGENASE-RELATED"/>
    <property type="match status" value="1"/>
</dbReference>
<dbReference type="Pfam" id="PF00171">
    <property type="entry name" value="Aldedh"/>
    <property type="match status" value="1"/>
</dbReference>
<dbReference type="SUPFAM" id="SSF53720">
    <property type="entry name" value="ALDH-like"/>
    <property type="match status" value="1"/>
</dbReference>
<dbReference type="PROSITE" id="PS00070">
    <property type="entry name" value="ALDEHYDE_DEHYDR_CYS"/>
    <property type="match status" value="1"/>
</dbReference>
<dbReference type="PROSITE" id="PS00687">
    <property type="entry name" value="ALDEHYDE_DEHYDR_GLU"/>
    <property type="match status" value="1"/>
</dbReference>
<feature type="chain" id="PRO_0000056596" description="Putative aldehyde dehydrogenase-like protein YHR039C">
    <location>
        <begin position="1"/>
        <end position="644"/>
    </location>
</feature>
<feature type="active site" description="Proton acceptor" evidence="3 4">
    <location>
        <position position="354"/>
    </location>
</feature>
<feature type="active site" description="Nucleophile" evidence="3 4">
    <location>
        <position position="389"/>
    </location>
</feature>
<feature type="site" description="Transition state stabilizer" evidence="1">
    <location>
        <position position="248"/>
    </location>
</feature>
<feature type="glycosylation site" description="N-linked (GlcNAc...) asparagine" evidence="2">
    <location>
        <position position="15"/>
    </location>
</feature>
<feature type="glycosylation site" description="N-linked (GlcNAc...) asparagine" evidence="2">
    <location>
        <position position="565"/>
    </location>
</feature>
<feature type="glycosylation site" description="N-linked (GlcNAc...) asparagine" evidence="2">
    <location>
        <position position="627"/>
    </location>
</feature>
<comment type="subcellular location">
    <subcellularLocation>
        <location evidence="5">Endoplasmic reticulum</location>
    </subcellularLocation>
</comment>
<comment type="PTM">
    <text evidence="7">N-glycosylated.</text>
</comment>
<comment type="miscellaneous">
    <text evidence="6">Present with 2500 molecules/cell in log phase SD medium.</text>
</comment>
<comment type="similarity">
    <text evidence="8">Belongs to the aldehyde dehydrogenase family.</text>
</comment>
<keyword id="KW-0256">Endoplasmic reticulum</keyword>
<keyword id="KW-0325">Glycoprotein</keyword>
<keyword id="KW-0560">Oxidoreductase</keyword>
<keyword id="KW-1185">Reference proteome</keyword>
<name>MSC7_YEAST</name>
<reference key="1">
    <citation type="journal article" date="1994" name="Science">
        <title>Complete nucleotide sequence of Saccharomyces cerevisiae chromosome VIII.</title>
        <authorList>
            <person name="Johnston M."/>
            <person name="Andrews S."/>
            <person name="Brinkman R."/>
            <person name="Cooper J."/>
            <person name="Ding H."/>
            <person name="Dover J."/>
            <person name="Du Z."/>
            <person name="Favello A."/>
            <person name="Fulton L."/>
            <person name="Gattung S."/>
            <person name="Geisel C."/>
            <person name="Kirsten J."/>
            <person name="Kucaba T."/>
            <person name="Hillier L.W."/>
            <person name="Jier M."/>
            <person name="Johnston L."/>
            <person name="Langston Y."/>
            <person name="Latreille P."/>
            <person name="Louis E.J."/>
            <person name="Macri C."/>
            <person name="Mardis E."/>
            <person name="Menezes S."/>
            <person name="Mouser L."/>
            <person name="Nhan M."/>
            <person name="Rifkin L."/>
            <person name="Riles L."/>
            <person name="St Peter H."/>
            <person name="Trevaskis E."/>
            <person name="Vaughan K."/>
            <person name="Vignati D."/>
            <person name="Wilcox L."/>
            <person name="Wohldman P."/>
            <person name="Waterston R."/>
            <person name="Wilson R."/>
            <person name="Vaudin M."/>
        </authorList>
    </citation>
    <scope>NUCLEOTIDE SEQUENCE [LARGE SCALE GENOMIC DNA]</scope>
    <source>
        <strain>ATCC 204508 / S288c</strain>
    </source>
</reference>
<reference key="2">
    <citation type="journal article" date="2014" name="G3 (Bethesda)">
        <title>The reference genome sequence of Saccharomyces cerevisiae: Then and now.</title>
        <authorList>
            <person name="Engel S.R."/>
            <person name="Dietrich F.S."/>
            <person name="Fisk D.G."/>
            <person name="Binkley G."/>
            <person name="Balakrishnan R."/>
            <person name="Costanzo M.C."/>
            <person name="Dwight S.S."/>
            <person name="Hitz B.C."/>
            <person name="Karra K."/>
            <person name="Nash R.S."/>
            <person name="Weng S."/>
            <person name="Wong E.D."/>
            <person name="Lloyd P."/>
            <person name="Skrzypek M.S."/>
            <person name="Miyasato S.R."/>
            <person name="Simison M."/>
            <person name="Cherry J.M."/>
        </authorList>
    </citation>
    <scope>GENOME REANNOTATION</scope>
    <source>
        <strain>ATCC 204508 / S288c</strain>
    </source>
</reference>
<reference key="3">
    <citation type="journal article" date="2003" name="Nature">
        <title>Global analysis of protein localization in budding yeast.</title>
        <authorList>
            <person name="Huh W.-K."/>
            <person name="Falvo J.V."/>
            <person name="Gerke L.C."/>
            <person name="Carroll A.S."/>
            <person name="Howson R.W."/>
            <person name="Weissman J.S."/>
            <person name="O'Shea E.K."/>
        </authorList>
    </citation>
    <scope>SUBCELLULAR LOCATION [LARGE SCALE ANALYSIS]</scope>
</reference>
<reference key="4">
    <citation type="journal article" date="2003" name="Nature">
        <title>Global analysis of protein expression in yeast.</title>
        <authorList>
            <person name="Ghaemmaghami S."/>
            <person name="Huh W.-K."/>
            <person name="Bower K."/>
            <person name="Howson R.W."/>
            <person name="Belle A."/>
            <person name="Dephoure N."/>
            <person name="O'Shea E.K."/>
            <person name="Weissman J.S."/>
        </authorList>
    </citation>
    <scope>LEVEL OF PROTEIN EXPRESSION [LARGE SCALE ANALYSIS]</scope>
</reference>
<reference key="5">
    <citation type="journal article" date="2009" name="Mol. Syst. Biol.">
        <title>Global analysis of the glycoproteome in Saccharomyces cerevisiae reveals new roles for protein glycosylation in eukaryotes.</title>
        <authorList>
            <person name="Kung L.A."/>
            <person name="Tao S.-C."/>
            <person name="Qian J."/>
            <person name="Smith M.G."/>
            <person name="Snyder M."/>
            <person name="Zhu H."/>
        </authorList>
    </citation>
    <scope>GLYCOSYLATION [LARGE SCALE ANALYSIS]</scope>
</reference>
<accession>P38694</accession>
<accession>D3DKY6</accession>
<sequence length="644" mass="71321">MSKVYLNSDMINHLNSTVQAYFNLWLEKQNAIMRSQPQIIQDNQKLIGITTLVASIFTLYVLVKIISTPAKCSSSYKPVKFSLPAPEAAQNNWKGKRSVSTNIWNPEEPNFIQCHCPATGQYLGSFPSKTEADIDEMVSKAGKAQSTWGNSDFSRRLRVLASLHDYILNNQDLIARVACRDSGKTMLDASMGEILVTLEKIQWTIKHGQRALQPSRRPGPTNFFMKWYKGAEIRYEPLGVISSIVSWNYPFHNLLGPIIAALFTGNAIVVKCSEQVVWSSEFFVELIRKCLEACDEDPDLVQLCYCLPPTENDDSANYFTSHPGFKHITFIGSQPVAHYILKCAAKSLTPVVVELGGKDAFIVLDSAKNLDALSSIIMRGTFQSSGQNCIGIERVIVSKENYDDLVKILNDRMTANPLRQGSDIDHLENVDMGAMISDNRFDELEALVKDAVAKGARLLQGGSRFKHPKYPQGHYFQPTLLVDVTPEMKIAQNEVFGPILVMMKAKNTDHCVQLANSAPFGLGGSVFGADIKECNYVANSLQTGNVAINDFATFYVCQLPFGGINGSGYGKFGGEEGLLGLCNAKSVCFDTLPFVSTQIPKPLDYPIRNNAKAWNFVKSFIVGAYTNSTWQRIKSLFSLAKEAS</sequence>
<proteinExistence type="evidence at protein level"/>
<gene>
    <name type="primary">MSC7</name>
    <name type="ordered locus">YHR039C</name>
</gene>
<protein>
    <recommendedName>
        <fullName>Putative aldehyde dehydrogenase-like protein YHR039C</fullName>
        <ecNumber>1.2.1.-</ecNumber>
    </recommendedName>
    <alternativeName>
        <fullName>Meiotic sister-chromatid recombination protein 7</fullName>
    </alternativeName>
</protein>
<organism>
    <name type="scientific">Saccharomyces cerevisiae (strain ATCC 204508 / S288c)</name>
    <name type="common">Baker's yeast</name>
    <dbReference type="NCBI Taxonomy" id="559292"/>
    <lineage>
        <taxon>Eukaryota</taxon>
        <taxon>Fungi</taxon>
        <taxon>Dikarya</taxon>
        <taxon>Ascomycota</taxon>
        <taxon>Saccharomycotina</taxon>
        <taxon>Saccharomycetes</taxon>
        <taxon>Saccharomycetales</taxon>
        <taxon>Saccharomycetaceae</taxon>
        <taxon>Saccharomyces</taxon>
    </lineage>
</organism>